<reference key="1">
    <citation type="journal article" date="2005" name="Infect. Immun.">
        <title>Whole-genome analyses of speciation events in pathogenic Brucellae.</title>
        <authorList>
            <person name="Chain P.S."/>
            <person name="Comerci D.J."/>
            <person name="Tolmasky M.E."/>
            <person name="Larimer F.W."/>
            <person name="Malfatti S.A."/>
            <person name="Vergez L.M."/>
            <person name="Aguero F."/>
            <person name="Land M.L."/>
            <person name="Ugalde R.A."/>
            <person name="Garcia E."/>
        </authorList>
    </citation>
    <scope>NUCLEOTIDE SEQUENCE [LARGE SCALE GENOMIC DNA]</scope>
    <source>
        <strain>2308</strain>
    </source>
</reference>
<comment type="function">
    <text evidence="1">Protein S19 forms a complex with S13 that binds strongly to the 16S ribosomal RNA.</text>
</comment>
<comment type="similarity">
    <text evidence="1">Belongs to the universal ribosomal protein uS19 family.</text>
</comment>
<sequence length="92" mass="10444">MARSVWKGPFVDGYLLKKAEKVREGGRNEVIKMWSRRSTILPQFVGLTFGVYNGNKHVPVSVSEEMVGHKFGEFAPTRTYYGHGADKKAKRK</sequence>
<proteinExistence type="inferred from homology"/>
<organism>
    <name type="scientific">Brucella abortus (strain 2308)</name>
    <dbReference type="NCBI Taxonomy" id="359391"/>
    <lineage>
        <taxon>Bacteria</taxon>
        <taxon>Pseudomonadati</taxon>
        <taxon>Pseudomonadota</taxon>
        <taxon>Alphaproteobacteria</taxon>
        <taxon>Hyphomicrobiales</taxon>
        <taxon>Brucellaceae</taxon>
        <taxon>Brucella/Ochrobactrum group</taxon>
        <taxon>Brucella</taxon>
    </lineage>
</organism>
<name>RS19_BRUA2</name>
<feature type="chain" id="PRO_0000265334" description="Small ribosomal subunit protein uS19">
    <location>
        <begin position="1"/>
        <end position="92"/>
    </location>
</feature>
<evidence type="ECO:0000255" key="1">
    <source>
        <dbReference type="HAMAP-Rule" id="MF_00531"/>
    </source>
</evidence>
<evidence type="ECO:0000305" key="2"/>
<gene>
    <name evidence="1" type="primary">rpsS</name>
    <name type="ordered locus">BAB1_1251</name>
</gene>
<accession>Q2YM07</accession>
<keyword id="KW-1185">Reference proteome</keyword>
<keyword id="KW-0687">Ribonucleoprotein</keyword>
<keyword id="KW-0689">Ribosomal protein</keyword>
<keyword id="KW-0694">RNA-binding</keyword>
<keyword id="KW-0699">rRNA-binding</keyword>
<dbReference type="EMBL" id="AM040264">
    <property type="protein sequence ID" value="CAJ11207.1"/>
    <property type="molecule type" value="Genomic_DNA"/>
</dbReference>
<dbReference type="RefSeq" id="WP_002964358.1">
    <property type="nucleotide sequence ID" value="NZ_KN046823.1"/>
</dbReference>
<dbReference type="SMR" id="Q2YM07"/>
<dbReference type="STRING" id="359391.BAB1_1251"/>
<dbReference type="GeneID" id="97533528"/>
<dbReference type="KEGG" id="bmf:BAB1_1251"/>
<dbReference type="PATRIC" id="fig|359391.11.peg.151"/>
<dbReference type="HOGENOM" id="CLU_144911_0_1_5"/>
<dbReference type="Proteomes" id="UP000002719">
    <property type="component" value="Chromosome I"/>
</dbReference>
<dbReference type="GO" id="GO:0005737">
    <property type="term" value="C:cytoplasm"/>
    <property type="evidence" value="ECO:0007669"/>
    <property type="project" value="UniProtKB-ARBA"/>
</dbReference>
<dbReference type="GO" id="GO:0015935">
    <property type="term" value="C:small ribosomal subunit"/>
    <property type="evidence" value="ECO:0007669"/>
    <property type="project" value="InterPro"/>
</dbReference>
<dbReference type="GO" id="GO:0019843">
    <property type="term" value="F:rRNA binding"/>
    <property type="evidence" value="ECO:0007669"/>
    <property type="project" value="UniProtKB-UniRule"/>
</dbReference>
<dbReference type="GO" id="GO:0003735">
    <property type="term" value="F:structural constituent of ribosome"/>
    <property type="evidence" value="ECO:0007669"/>
    <property type="project" value="InterPro"/>
</dbReference>
<dbReference type="GO" id="GO:0000028">
    <property type="term" value="P:ribosomal small subunit assembly"/>
    <property type="evidence" value="ECO:0007669"/>
    <property type="project" value="TreeGrafter"/>
</dbReference>
<dbReference type="GO" id="GO:0006412">
    <property type="term" value="P:translation"/>
    <property type="evidence" value="ECO:0007669"/>
    <property type="project" value="UniProtKB-UniRule"/>
</dbReference>
<dbReference type="FunFam" id="3.30.860.10:FF:000001">
    <property type="entry name" value="30S ribosomal protein S19"/>
    <property type="match status" value="1"/>
</dbReference>
<dbReference type="Gene3D" id="3.30.860.10">
    <property type="entry name" value="30s Ribosomal Protein S19, Chain A"/>
    <property type="match status" value="1"/>
</dbReference>
<dbReference type="HAMAP" id="MF_00531">
    <property type="entry name" value="Ribosomal_uS19"/>
    <property type="match status" value="1"/>
</dbReference>
<dbReference type="InterPro" id="IPR002222">
    <property type="entry name" value="Ribosomal_uS19"/>
</dbReference>
<dbReference type="InterPro" id="IPR005732">
    <property type="entry name" value="Ribosomal_uS19_bac-type"/>
</dbReference>
<dbReference type="InterPro" id="IPR020934">
    <property type="entry name" value="Ribosomal_uS19_CS"/>
</dbReference>
<dbReference type="InterPro" id="IPR023575">
    <property type="entry name" value="Ribosomal_uS19_SF"/>
</dbReference>
<dbReference type="NCBIfam" id="TIGR01050">
    <property type="entry name" value="rpsS_bact"/>
    <property type="match status" value="1"/>
</dbReference>
<dbReference type="PANTHER" id="PTHR11880">
    <property type="entry name" value="RIBOSOMAL PROTEIN S19P FAMILY MEMBER"/>
    <property type="match status" value="1"/>
</dbReference>
<dbReference type="PANTHER" id="PTHR11880:SF8">
    <property type="entry name" value="SMALL RIBOSOMAL SUBUNIT PROTEIN US19M"/>
    <property type="match status" value="1"/>
</dbReference>
<dbReference type="Pfam" id="PF00203">
    <property type="entry name" value="Ribosomal_S19"/>
    <property type="match status" value="1"/>
</dbReference>
<dbReference type="PIRSF" id="PIRSF002144">
    <property type="entry name" value="Ribosomal_S19"/>
    <property type="match status" value="1"/>
</dbReference>
<dbReference type="PRINTS" id="PR00975">
    <property type="entry name" value="RIBOSOMALS19"/>
</dbReference>
<dbReference type="SUPFAM" id="SSF54570">
    <property type="entry name" value="Ribosomal protein S19"/>
    <property type="match status" value="1"/>
</dbReference>
<dbReference type="PROSITE" id="PS00323">
    <property type="entry name" value="RIBOSOMAL_S19"/>
    <property type="match status" value="1"/>
</dbReference>
<protein>
    <recommendedName>
        <fullName evidence="1">Small ribosomal subunit protein uS19</fullName>
    </recommendedName>
    <alternativeName>
        <fullName evidence="2">30S ribosomal protein S19</fullName>
    </alternativeName>
</protein>